<comment type="function">
    <text evidence="2">Involved in vitamin K metabolism. Can reduce inactive vitamin K 2,3-epoxide to active vitamin K, and may contribute to vitamin K-mediated protection against oxidative stress. Plays a role in vitamin K-dependent gamma-carboxylation of Glu residues in target proteins.</text>
</comment>
<comment type="catalytic activity">
    <reaction evidence="2">
        <text>phylloquinone + [protein]-disulfide + H2O = 2,3-epoxyphylloquinone + [protein]-dithiol</text>
        <dbReference type="Rhea" id="RHEA:13817"/>
        <dbReference type="Rhea" id="RHEA-COMP:10593"/>
        <dbReference type="Rhea" id="RHEA-COMP:10594"/>
        <dbReference type="ChEBI" id="CHEBI:15377"/>
        <dbReference type="ChEBI" id="CHEBI:15759"/>
        <dbReference type="ChEBI" id="CHEBI:18067"/>
        <dbReference type="ChEBI" id="CHEBI:29950"/>
        <dbReference type="ChEBI" id="CHEBI:50058"/>
        <dbReference type="EC" id="1.17.4.4"/>
    </reaction>
</comment>
<comment type="catalytic activity">
    <reaction evidence="2">
        <text>phylloquinol + [protein]-disulfide = phylloquinone + [protein]-dithiol</text>
        <dbReference type="Rhea" id="RHEA:57744"/>
        <dbReference type="Rhea" id="RHEA-COMP:10593"/>
        <dbReference type="Rhea" id="RHEA-COMP:10594"/>
        <dbReference type="ChEBI" id="CHEBI:18067"/>
        <dbReference type="ChEBI" id="CHEBI:28433"/>
        <dbReference type="ChEBI" id="CHEBI:29950"/>
        <dbReference type="ChEBI" id="CHEBI:50058"/>
        <dbReference type="EC" id="1.17.4.4"/>
    </reaction>
</comment>
<comment type="activity regulation">
    <text evidence="1 2">Inhibited by warfarin (coumadin) (PubMed:23928358). Warfarin locks VKORC1 in both redox states into the closed conformation (By similarity).</text>
</comment>
<comment type="subcellular location">
    <subcellularLocation>
        <location evidence="2">Endoplasmic reticulum membrane</location>
        <topology evidence="2">Multi-pass membrane protein</topology>
    </subcellularLocation>
</comment>
<comment type="tissue specificity">
    <text evidence="2">Detected in testis and lung.</text>
</comment>
<comment type="miscellaneous">
    <text evidence="2">Vkorc1l1 overexpression cannot rescue the lethal phenotype of Vkorc1-deficient mice, suggesting that the protein does not play a major role in vitamin K-dependent blood coagulation.</text>
</comment>
<comment type="similarity">
    <text evidence="3">Belongs to the VKOR family.</text>
</comment>
<evidence type="ECO:0000250" key="1">
    <source>
        <dbReference type="UniProtKB" id="Q6TEK8"/>
    </source>
</evidence>
<evidence type="ECO:0000269" key="2">
    <source>
    </source>
</evidence>
<evidence type="ECO:0000305" key="3"/>
<protein>
    <recommendedName>
        <fullName>Vitamin K epoxide reductase complex subunit 1-like protein 1</fullName>
        <shortName>VKORC1-like protein 1</shortName>
        <ecNumber evidence="2">1.17.4.4</ecNumber>
    </recommendedName>
</protein>
<dbReference type="EC" id="1.17.4.4" evidence="2"/>
<dbReference type="EMBL" id="AY423046">
    <property type="protein sequence ID" value="AAR82916.1"/>
    <property type="molecule type" value="mRNA"/>
</dbReference>
<dbReference type="EMBL" id="BC125315">
    <property type="protein sequence ID" value="AAI25316.1"/>
    <property type="molecule type" value="mRNA"/>
</dbReference>
<dbReference type="EMBL" id="BC138132">
    <property type="protein sequence ID" value="AAI38133.1"/>
    <property type="molecule type" value="mRNA"/>
</dbReference>
<dbReference type="CCDS" id="CCDS19703.1"/>
<dbReference type="RefSeq" id="NP_081397.1">
    <property type="nucleotide sequence ID" value="NM_027121.4"/>
</dbReference>
<dbReference type="SMR" id="Q6TEK5"/>
<dbReference type="BioGRID" id="213537">
    <property type="interactions" value="2"/>
</dbReference>
<dbReference type="FunCoup" id="Q6TEK5">
    <property type="interactions" value="822"/>
</dbReference>
<dbReference type="STRING" id="10090.ENSMUSP00000059139"/>
<dbReference type="PhosphoSitePlus" id="Q6TEK5"/>
<dbReference type="SwissPalm" id="Q6TEK5"/>
<dbReference type="jPOST" id="Q6TEK5"/>
<dbReference type="PaxDb" id="10090-ENSMUSP00000073601"/>
<dbReference type="PeptideAtlas" id="Q6TEK5"/>
<dbReference type="ProteomicsDB" id="300170"/>
<dbReference type="Pumba" id="Q6TEK5"/>
<dbReference type="Antibodypedia" id="57350">
    <property type="antibodies" value="94 antibodies from 17 providers"/>
</dbReference>
<dbReference type="DNASU" id="69568"/>
<dbReference type="Ensembl" id="ENSMUST00000051758.11">
    <property type="protein sequence ID" value="ENSMUSP00000059139.9"/>
    <property type="gene ID" value="ENSMUSG00000066735.9"/>
</dbReference>
<dbReference type="GeneID" id="69568"/>
<dbReference type="KEGG" id="mmu:69568"/>
<dbReference type="UCSC" id="uc008ztr.2">
    <property type="organism name" value="mouse"/>
</dbReference>
<dbReference type="AGR" id="MGI:1916818"/>
<dbReference type="CTD" id="154807"/>
<dbReference type="MGI" id="MGI:1916818">
    <property type="gene designation" value="Vkorc1l1"/>
</dbReference>
<dbReference type="VEuPathDB" id="HostDB:ENSMUSG00000066735"/>
<dbReference type="eggNOG" id="ENOG502S4E7">
    <property type="taxonomic scope" value="Eukaryota"/>
</dbReference>
<dbReference type="GeneTree" id="ENSGT00940000157044"/>
<dbReference type="HOGENOM" id="CLU_105471_2_0_1"/>
<dbReference type="InParanoid" id="Q6TEK5"/>
<dbReference type="OMA" id="EFCVVCV"/>
<dbReference type="OrthoDB" id="17010at2759"/>
<dbReference type="PhylomeDB" id="Q6TEK5"/>
<dbReference type="TreeFam" id="TF328467"/>
<dbReference type="BRENDA" id="1.17.4.4">
    <property type="organism ID" value="3474"/>
</dbReference>
<dbReference type="Reactome" id="R-MMU-6806664">
    <property type="pathway name" value="Metabolism of vitamin K"/>
</dbReference>
<dbReference type="BioGRID-ORCS" id="69568">
    <property type="hits" value="11 hits in 75 CRISPR screens"/>
</dbReference>
<dbReference type="ChiTaRS" id="Vkorc1l1">
    <property type="organism name" value="mouse"/>
</dbReference>
<dbReference type="PRO" id="PR:Q6TEK5"/>
<dbReference type="Proteomes" id="UP000000589">
    <property type="component" value="Chromosome 5"/>
</dbReference>
<dbReference type="RNAct" id="Q6TEK5">
    <property type="molecule type" value="protein"/>
</dbReference>
<dbReference type="Bgee" id="ENSMUSG00000066735">
    <property type="expression patterns" value="Expressed in embryonic post-anal tail and 219 other cell types or tissues"/>
</dbReference>
<dbReference type="ExpressionAtlas" id="Q6TEK5">
    <property type="expression patterns" value="baseline and differential"/>
</dbReference>
<dbReference type="GO" id="GO:0005789">
    <property type="term" value="C:endoplasmic reticulum membrane"/>
    <property type="evidence" value="ECO:0000314"/>
    <property type="project" value="MGI"/>
</dbReference>
<dbReference type="GO" id="GO:0048038">
    <property type="term" value="F:quinone binding"/>
    <property type="evidence" value="ECO:0007669"/>
    <property type="project" value="UniProtKB-KW"/>
</dbReference>
<dbReference type="GO" id="GO:0047057">
    <property type="term" value="F:vitamin-K-epoxide reductase (warfarin-sensitive) activity"/>
    <property type="evidence" value="ECO:0000314"/>
    <property type="project" value="UniProtKB"/>
</dbReference>
<dbReference type="GO" id="GO:0034599">
    <property type="term" value="P:cellular response to oxidative stress"/>
    <property type="evidence" value="ECO:0000250"/>
    <property type="project" value="UniProtKB"/>
</dbReference>
<dbReference type="GO" id="GO:0017187">
    <property type="term" value="P:peptidyl-glutamic acid carboxylation"/>
    <property type="evidence" value="ECO:0000250"/>
    <property type="project" value="UniProtKB"/>
</dbReference>
<dbReference type="GO" id="GO:0042373">
    <property type="term" value="P:vitamin K metabolic process"/>
    <property type="evidence" value="ECO:0000314"/>
    <property type="project" value="UniProtKB"/>
</dbReference>
<dbReference type="CDD" id="cd12917">
    <property type="entry name" value="VKOR_euk"/>
    <property type="match status" value="1"/>
</dbReference>
<dbReference type="FunFam" id="1.20.1440.130:FF:000001">
    <property type="entry name" value="Vitamin K epoxide reductase complex subunit 1-like 1"/>
    <property type="match status" value="1"/>
</dbReference>
<dbReference type="Gene3D" id="1.20.1440.130">
    <property type="entry name" value="VKOR domain"/>
    <property type="match status" value="1"/>
</dbReference>
<dbReference type="InterPro" id="IPR012932">
    <property type="entry name" value="VKOR"/>
</dbReference>
<dbReference type="InterPro" id="IPR038354">
    <property type="entry name" value="VKOR_sf"/>
</dbReference>
<dbReference type="InterPro" id="IPR042406">
    <property type="entry name" value="VKORC1/VKORC1L1"/>
</dbReference>
<dbReference type="PANTHER" id="PTHR14519:SF5">
    <property type="entry name" value="VITAMIN K EPOXIDE REDUCTASE COMPLEX SUBUNIT 1-LIKE PROTEIN 1"/>
    <property type="match status" value="1"/>
</dbReference>
<dbReference type="PANTHER" id="PTHR14519">
    <property type="entry name" value="VITAMIN K EPOXIDE REDUCTASE COMPLEX, SUBUNIT 1"/>
    <property type="match status" value="1"/>
</dbReference>
<dbReference type="Pfam" id="PF07884">
    <property type="entry name" value="VKOR"/>
    <property type="match status" value="1"/>
</dbReference>
<dbReference type="SMART" id="SM00756">
    <property type="entry name" value="VKc"/>
    <property type="match status" value="1"/>
</dbReference>
<reference key="1">
    <citation type="journal article" date="2004" name="Nature">
        <title>Mutations in VKORC1 cause warfarin resistance and multiple coagulation factor deficiency type 2.</title>
        <authorList>
            <person name="Rost S."/>
            <person name="Fregin A."/>
            <person name="Ivaskevicius V."/>
            <person name="Conzelmann E."/>
            <person name="Hoertnagel K."/>
            <person name="Pelz H.-J."/>
            <person name="Lappegard K."/>
            <person name="Seifried E."/>
            <person name="Scharrer I."/>
            <person name="Tuddenham E.G.D."/>
            <person name="Mueller C.R."/>
            <person name="Strom T.M."/>
            <person name="Oldenburg J."/>
        </authorList>
    </citation>
    <scope>NUCLEOTIDE SEQUENCE [MRNA]</scope>
    <source>
        <strain>BALB/cJ</strain>
        <tissue>Kidney</tissue>
    </source>
</reference>
<reference key="2">
    <citation type="journal article" date="2004" name="Genome Res.">
        <title>The status, quality, and expansion of the NIH full-length cDNA project: the Mammalian Gene Collection (MGC).</title>
        <authorList>
            <consortium name="The MGC Project Team"/>
        </authorList>
    </citation>
    <scope>NUCLEOTIDE SEQUENCE [LARGE SCALE MRNA]</scope>
    <source>
        <tissue>Brain</tissue>
    </source>
</reference>
<reference key="3">
    <citation type="journal article" date="2010" name="Cell">
        <title>A tissue-specific atlas of mouse protein phosphorylation and expression.</title>
        <authorList>
            <person name="Huttlin E.L."/>
            <person name="Jedrychowski M.P."/>
            <person name="Elias J.E."/>
            <person name="Goswami T."/>
            <person name="Rad R."/>
            <person name="Beausoleil S.A."/>
            <person name="Villen J."/>
            <person name="Haas W."/>
            <person name="Sowa M.E."/>
            <person name="Gygi S.P."/>
        </authorList>
    </citation>
    <scope>IDENTIFICATION BY MASS SPECTROMETRY [LARGE SCALE ANALYSIS]</scope>
    <source>
        <tissue>Brain</tissue>
        <tissue>Brown adipose tissue</tissue>
        <tissue>Heart</tissue>
        <tissue>Kidney</tissue>
        <tissue>Liver</tissue>
        <tissue>Lung</tissue>
        <tissue>Pancreas</tissue>
        <tissue>Spleen</tissue>
        <tissue>Testis</tissue>
    </source>
</reference>
<reference key="4">
    <citation type="journal article" date="2013" name="J. Biol. Chem.">
        <title>VKORC1L1, an enzyme rescuing the vitamin K 2,3-epoxide reductase activity in some extrahepatic tissues during anticoagulation therapy.</title>
        <authorList>
            <person name="Hammed A."/>
            <person name="Matagrin B."/>
            <person name="Spohn G."/>
            <person name="Prouillac C."/>
            <person name="Benoit E."/>
            <person name="Lattard V."/>
        </authorList>
    </citation>
    <scope>TISSUE SPECIFICITY</scope>
    <scope>SUBCELLULAR LOCATION</scope>
    <scope>FUNCTION</scope>
    <scope>CATALYTIC ACTIVITY</scope>
    <scope>ACTIVITY REGULATION</scope>
</reference>
<keyword id="KW-1015">Disulfide bond</keyword>
<keyword id="KW-0256">Endoplasmic reticulum</keyword>
<keyword id="KW-0472">Membrane</keyword>
<keyword id="KW-0560">Oxidoreductase</keyword>
<keyword id="KW-0874">Quinone</keyword>
<keyword id="KW-0676">Redox-active center</keyword>
<keyword id="KW-1185">Reference proteome</keyword>
<keyword id="KW-0812">Transmembrane</keyword>
<keyword id="KW-1133">Transmembrane helix</keyword>
<feature type="chain" id="PRO_0000191672" description="Vitamin K epoxide reductase complex subunit 1-like protein 1">
    <location>
        <begin position="1"/>
        <end position="176"/>
    </location>
</feature>
<feature type="topological domain" description="Cytoplasmic" evidence="1">
    <location>
        <begin position="1"/>
        <end position="13"/>
    </location>
</feature>
<feature type="transmembrane region" description="Helical" evidence="1">
    <location>
        <begin position="14"/>
        <end position="36"/>
    </location>
</feature>
<feature type="topological domain" description="Lumenal" evidence="1">
    <location>
        <begin position="37"/>
        <end position="87"/>
    </location>
</feature>
<feature type="transmembrane region" description="Helical" evidence="1">
    <location>
        <begin position="88"/>
        <end position="102"/>
    </location>
</feature>
<feature type="topological domain" description="Cytoplasmic" evidence="1">
    <location>
        <begin position="103"/>
        <end position="107"/>
    </location>
</feature>
<feature type="transmembrane region" description="Helical" evidence="1">
    <location>
        <begin position="108"/>
        <end position="135"/>
    </location>
</feature>
<feature type="topological domain" description="Lumenal" evidence="1">
    <location>
        <begin position="136"/>
        <end position="138"/>
    </location>
</feature>
<feature type="transmembrane region" description="Helical" evidence="1">
    <location>
        <begin position="139"/>
        <end position="160"/>
    </location>
</feature>
<feature type="topological domain" description="Cytoplasmic" evidence="1">
    <location>
        <begin position="161"/>
        <end position="176"/>
    </location>
</feature>
<feature type="binding site" evidence="1">
    <location>
        <position position="87"/>
    </location>
    <ligand>
        <name>(S)-warfarin</name>
        <dbReference type="ChEBI" id="CHEBI:87744"/>
    </ligand>
</feature>
<feature type="binding site" evidence="1">
    <location>
        <position position="142"/>
    </location>
    <ligand>
        <name>phylloquinone</name>
        <dbReference type="ChEBI" id="CHEBI:18067"/>
    </ligand>
</feature>
<feature type="binding site" evidence="1">
    <location>
        <position position="146"/>
    </location>
    <ligand>
        <name>(S)-warfarin</name>
        <dbReference type="ChEBI" id="CHEBI:87744"/>
    </ligand>
</feature>
<feature type="binding site" evidence="1">
    <location>
        <position position="146"/>
    </location>
    <ligand>
        <name>phylloquinone</name>
        <dbReference type="ChEBI" id="CHEBI:18067"/>
    </ligand>
</feature>
<feature type="disulfide bond" description="Redox-active" evidence="1">
    <location>
        <begin position="50"/>
        <end position="58"/>
    </location>
</feature>
<feature type="disulfide bond" description="Redox-active" evidence="1">
    <location>
        <begin position="139"/>
        <end position="142"/>
    </location>
</feature>
<proteinExistence type="evidence at protein level"/>
<sequence length="176" mass="19779">MAAPVLLRVSVPRWERVARYAVCAAGILLSIYAYHVEREKERDPEHRALCDLGPWVKCSAALASRWGRGFGLLGSIFGKDGVLNQPNSVFGLIFYILQLLLGMTASAVAALVLMTSSIVSVVGSLYLAYILYFVLKEFCIICVTTYVLNFLLLIINYKRLVYLNEAWKRQLQPKED</sequence>
<name>VKORL_MOUSE</name>
<gene>
    <name type="primary">Vkorc1l1</name>
</gene>
<accession>Q6TEK5</accession>
<accession>Q05AD4</accession>
<organism>
    <name type="scientific">Mus musculus</name>
    <name type="common">Mouse</name>
    <dbReference type="NCBI Taxonomy" id="10090"/>
    <lineage>
        <taxon>Eukaryota</taxon>
        <taxon>Metazoa</taxon>
        <taxon>Chordata</taxon>
        <taxon>Craniata</taxon>
        <taxon>Vertebrata</taxon>
        <taxon>Euteleostomi</taxon>
        <taxon>Mammalia</taxon>
        <taxon>Eutheria</taxon>
        <taxon>Euarchontoglires</taxon>
        <taxon>Glires</taxon>
        <taxon>Rodentia</taxon>
        <taxon>Myomorpha</taxon>
        <taxon>Muroidea</taxon>
        <taxon>Muridae</taxon>
        <taxon>Murinae</taxon>
        <taxon>Mus</taxon>
        <taxon>Mus</taxon>
    </lineage>
</organism>